<sequence length="146" mass="15441">MTVEVLFKGGYTPQRAFDGDAGFDLQSSHTAVIQPRCRQVVKTGIAIALPDGYAGFIMPRSGLASENGITLVNSPGVIDAGYRGEISVVLINTDLHQAFHISQGDRIAQLVIMPVCHASFIEVDTLPGSARGISAFGSSGRHDTRG</sequence>
<evidence type="ECO:0000255" key="1">
    <source>
        <dbReference type="HAMAP-Rule" id="MF_00116"/>
    </source>
</evidence>
<dbReference type="EC" id="3.6.1.23" evidence="1"/>
<dbReference type="EMBL" id="BX251410">
    <property type="protein sequence ID" value="CAD66951.1"/>
    <property type="molecule type" value="Genomic_DNA"/>
</dbReference>
<dbReference type="RefSeq" id="WP_011096231.1">
    <property type="nucleotide sequence ID" value="NC_004551.1"/>
</dbReference>
<dbReference type="SMR" id="Q83I22"/>
<dbReference type="GeneID" id="67388051"/>
<dbReference type="KEGG" id="tws:TW277"/>
<dbReference type="HOGENOM" id="CLU_068508_1_3_11"/>
<dbReference type="UniPathway" id="UPA00610">
    <property type="reaction ID" value="UER00666"/>
</dbReference>
<dbReference type="GO" id="GO:0004170">
    <property type="term" value="F:dUTP diphosphatase activity"/>
    <property type="evidence" value="ECO:0007669"/>
    <property type="project" value="UniProtKB-UniRule"/>
</dbReference>
<dbReference type="GO" id="GO:0000287">
    <property type="term" value="F:magnesium ion binding"/>
    <property type="evidence" value="ECO:0007669"/>
    <property type="project" value="UniProtKB-UniRule"/>
</dbReference>
<dbReference type="GO" id="GO:0006226">
    <property type="term" value="P:dUMP biosynthetic process"/>
    <property type="evidence" value="ECO:0007669"/>
    <property type="project" value="UniProtKB-UniRule"/>
</dbReference>
<dbReference type="GO" id="GO:0046081">
    <property type="term" value="P:dUTP catabolic process"/>
    <property type="evidence" value="ECO:0007669"/>
    <property type="project" value="InterPro"/>
</dbReference>
<dbReference type="CDD" id="cd07557">
    <property type="entry name" value="trimeric_dUTPase"/>
    <property type="match status" value="1"/>
</dbReference>
<dbReference type="Gene3D" id="2.70.40.10">
    <property type="match status" value="1"/>
</dbReference>
<dbReference type="HAMAP" id="MF_00116">
    <property type="entry name" value="dUTPase_bact"/>
    <property type="match status" value="1"/>
</dbReference>
<dbReference type="InterPro" id="IPR008181">
    <property type="entry name" value="dUTPase"/>
</dbReference>
<dbReference type="InterPro" id="IPR029054">
    <property type="entry name" value="dUTPase-like"/>
</dbReference>
<dbReference type="InterPro" id="IPR036157">
    <property type="entry name" value="dUTPase-like_sf"/>
</dbReference>
<dbReference type="InterPro" id="IPR033704">
    <property type="entry name" value="dUTPase_trimeric"/>
</dbReference>
<dbReference type="NCBIfam" id="TIGR00576">
    <property type="entry name" value="dut"/>
    <property type="match status" value="1"/>
</dbReference>
<dbReference type="NCBIfam" id="NF001862">
    <property type="entry name" value="PRK00601.1"/>
    <property type="match status" value="1"/>
</dbReference>
<dbReference type="PANTHER" id="PTHR11241">
    <property type="entry name" value="DEOXYURIDINE 5'-TRIPHOSPHATE NUCLEOTIDOHYDROLASE"/>
    <property type="match status" value="1"/>
</dbReference>
<dbReference type="PANTHER" id="PTHR11241:SF0">
    <property type="entry name" value="DEOXYURIDINE 5'-TRIPHOSPHATE NUCLEOTIDOHYDROLASE"/>
    <property type="match status" value="1"/>
</dbReference>
<dbReference type="Pfam" id="PF00692">
    <property type="entry name" value="dUTPase"/>
    <property type="match status" value="1"/>
</dbReference>
<dbReference type="SUPFAM" id="SSF51283">
    <property type="entry name" value="dUTPase-like"/>
    <property type="match status" value="1"/>
</dbReference>
<keyword id="KW-0378">Hydrolase</keyword>
<keyword id="KW-0460">Magnesium</keyword>
<keyword id="KW-0479">Metal-binding</keyword>
<keyword id="KW-0546">Nucleotide metabolism</keyword>
<proteinExistence type="inferred from homology"/>
<feature type="chain" id="PRO_0000182914" description="Deoxyuridine 5'-triphosphate nucleotidohydrolase">
    <location>
        <begin position="1"/>
        <end position="146"/>
    </location>
</feature>
<feature type="binding site" evidence="1">
    <location>
        <begin position="60"/>
        <end position="62"/>
    </location>
    <ligand>
        <name>substrate</name>
    </ligand>
</feature>
<feature type="binding site" evidence="1">
    <location>
        <position position="73"/>
    </location>
    <ligand>
        <name>substrate</name>
    </ligand>
</feature>
<feature type="binding site" evidence="1">
    <location>
        <begin position="77"/>
        <end position="79"/>
    </location>
    <ligand>
        <name>substrate</name>
    </ligand>
</feature>
<protein>
    <recommendedName>
        <fullName evidence="1">Deoxyuridine 5'-triphosphate nucleotidohydrolase</fullName>
        <shortName evidence="1">dUTPase</shortName>
        <ecNumber evidence="1">3.6.1.23</ecNumber>
    </recommendedName>
    <alternativeName>
        <fullName evidence="1">dUTP pyrophosphatase</fullName>
    </alternativeName>
</protein>
<accession>Q83I22</accession>
<organism>
    <name type="scientific">Tropheryma whipplei (strain TW08/27)</name>
    <name type="common">Whipple's bacillus</name>
    <dbReference type="NCBI Taxonomy" id="218496"/>
    <lineage>
        <taxon>Bacteria</taxon>
        <taxon>Bacillati</taxon>
        <taxon>Actinomycetota</taxon>
        <taxon>Actinomycetes</taxon>
        <taxon>Micrococcales</taxon>
        <taxon>Tropherymataceae</taxon>
        <taxon>Tropheryma</taxon>
    </lineage>
</organism>
<gene>
    <name evidence="1" type="primary">dut</name>
    <name type="ordered locus">TW277</name>
</gene>
<reference key="1">
    <citation type="journal article" date="2003" name="Lancet">
        <title>Sequencing and analysis of the genome of the Whipple's disease bacterium Tropheryma whipplei.</title>
        <authorList>
            <person name="Bentley S.D."/>
            <person name="Maiwald M."/>
            <person name="Murphy L.D."/>
            <person name="Pallen M.J."/>
            <person name="Yeats C.A."/>
            <person name="Dover L.G."/>
            <person name="Norbertczak H.T."/>
            <person name="Besra G.S."/>
            <person name="Quail M.A."/>
            <person name="Harris D.E."/>
            <person name="von Herbay A."/>
            <person name="Goble A."/>
            <person name="Rutter S."/>
            <person name="Squares R."/>
            <person name="Squares S."/>
            <person name="Barrell B.G."/>
            <person name="Parkhill J."/>
            <person name="Relman D.A."/>
        </authorList>
    </citation>
    <scope>NUCLEOTIDE SEQUENCE [LARGE SCALE GENOMIC DNA]</scope>
    <source>
        <strain>TW08/27</strain>
    </source>
</reference>
<comment type="function">
    <text evidence="1">This enzyme is involved in nucleotide metabolism: it produces dUMP, the immediate precursor of thymidine nucleotides and it decreases the intracellular concentration of dUTP so that uracil cannot be incorporated into DNA.</text>
</comment>
<comment type="catalytic activity">
    <reaction evidence="1">
        <text>dUTP + H2O = dUMP + diphosphate + H(+)</text>
        <dbReference type="Rhea" id="RHEA:10248"/>
        <dbReference type="ChEBI" id="CHEBI:15377"/>
        <dbReference type="ChEBI" id="CHEBI:15378"/>
        <dbReference type="ChEBI" id="CHEBI:33019"/>
        <dbReference type="ChEBI" id="CHEBI:61555"/>
        <dbReference type="ChEBI" id="CHEBI:246422"/>
        <dbReference type="EC" id="3.6.1.23"/>
    </reaction>
</comment>
<comment type="cofactor">
    <cofactor evidence="1">
        <name>Mg(2+)</name>
        <dbReference type="ChEBI" id="CHEBI:18420"/>
    </cofactor>
</comment>
<comment type="pathway">
    <text evidence="1">Pyrimidine metabolism; dUMP biosynthesis; dUMP from dCTP (dUTP route): step 2/2.</text>
</comment>
<comment type="similarity">
    <text evidence="1">Belongs to the dUTPase family.</text>
</comment>
<name>DUT_TROW8</name>